<evidence type="ECO:0000255" key="1">
    <source>
        <dbReference type="HAMAP-Rule" id="MF_00044"/>
    </source>
</evidence>
<gene>
    <name evidence="1" type="primary">aspS</name>
    <name type="ordered locus">P9515_18791</name>
</gene>
<protein>
    <recommendedName>
        <fullName evidence="1">Aspartate--tRNA(Asp/Asn) ligase</fullName>
        <ecNumber evidence="1">6.1.1.23</ecNumber>
    </recommendedName>
    <alternativeName>
        <fullName evidence="1">Aspartyl-tRNA synthetase</fullName>
        <shortName evidence="1">AspRS</shortName>
    </alternativeName>
    <alternativeName>
        <fullName evidence="1">Non-discriminating aspartyl-tRNA synthetase</fullName>
        <shortName evidence="1">ND-AspRS</shortName>
    </alternativeName>
</protein>
<dbReference type="EC" id="6.1.1.23" evidence="1"/>
<dbReference type="EMBL" id="CP000552">
    <property type="protein sequence ID" value="ABM73086.1"/>
    <property type="molecule type" value="Genomic_DNA"/>
</dbReference>
<dbReference type="RefSeq" id="WP_011821170.1">
    <property type="nucleotide sequence ID" value="NC_008817.1"/>
</dbReference>
<dbReference type="SMR" id="A2BZ75"/>
<dbReference type="STRING" id="167542.P9515_18791"/>
<dbReference type="GeneID" id="60201579"/>
<dbReference type="KEGG" id="pmc:P9515_18791"/>
<dbReference type="eggNOG" id="COG0173">
    <property type="taxonomic scope" value="Bacteria"/>
</dbReference>
<dbReference type="HOGENOM" id="CLU_014330_3_2_3"/>
<dbReference type="OrthoDB" id="9802326at2"/>
<dbReference type="Proteomes" id="UP000001589">
    <property type="component" value="Chromosome"/>
</dbReference>
<dbReference type="GO" id="GO:0005737">
    <property type="term" value="C:cytoplasm"/>
    <property type="evidence" value="ECO:0007669"/>
    <property type="project" value="UniProtKB-SubCell"/>
</dbReference>
<dbReference type="GO" id="GO:0004815">
    <property type="term" value="F:aspartate-tRNA ligase activity"/>
    <property type="evidence" value="ECO:0007669"/>
    <property type="project" value="UniProtKB-UniRule"/>
</dbReference>
<dbReference type="GO" id="GO:0050560">
    <property type="term" value="F:aspartate-tRNA(Asn) ligase activity"/>
    <property type="evidence" value="ECO:0007669"/>
    <property type="project" value="UniProtKB-EC"/>
</dbReference>
<dbReference type="GO" id="GO:0005524">
    <property type="term" value="F:ATP binding"/>
    <property type="evidence" value="ECO:0007669"/>
    <property type="project" value="UniProtKB-UniRule"/>
</dbReference>
<dbReference type="GO" id="GO:0003676">
    <property type="term" value="F:nucleic acid binding"/>
    <property type="evidence" value="ECO:0007669"/>
    <property type="project" value="InterPro"/>
</dbReference>
<dbReference type="GO" id="GO:0006422">
    <property type="term" value="P:aspartyl-tRNA aminoacylation"/>
    <property type="evidence" value="ECO:0007669"/>
    <property type="project" value="UniProtKB-UniRule"/>
</dbReference>
<dbReference type="CDD" id="cd00777">
    <property type="entry name" value="AspRS_core"/>
    <property type="match status" value="1"/>
</dbReference>
<dbReference type="CDD" id="cd04317">
    <property type="entry name" value="EcAspRS_like_N"/>
    <property type="match status" value="1"/>
</dbReference>
<dbReference type="Gene3D" id="3.30.930.10">
    <property type="entry name" value="Bira Bifunctional Protein, Domain 2"/>
    <property type="match status" value="1"/>
</dbReference>
<dbReference type="Gene3D" id="3.30.1360.30">
    <property type="entry name" value="GAD-like domain"/>
    <property type="match status" value="1"/>
</dbReference>
<dbReference type="Gene3D" id="2.40.50.140">
    <property type="entry name" value="Nucleic acid-binding proteins"/>
    <property type="match status" value="1"/>
</dbReference>
<dbReference type="HAMAP" id="MF_00044">
    <property type="entry name" value="Asp_tRNA_synth_type1"/>
    <property type="match status" value="1"/>
</dbReference>
<dbReference type="InterPro" id="IPR004364">
    <property type="entry name" value="Aa-tRNA-synt_II"/>
</dbReference>
<dbReference type="InterPro" id="IPR006195">
    <property type="entry name" value="aa-tRNA-synth_II"/>
</dbReference>
<dbReference type="InterPro" id="IPR045864">
    <property type="entry name" value="aa-tRNA-synth_II/BPL/LPL"/>
</dbReference>
<dbReference type="InterPro" id="IPR004524">
    <property type="entry name" value="Asp-tRNA-ligase_1"/>
</dbReference>
<dbReference type="InterPro" id="IPR047089">
    <property type="entry name" value="Asp-tRNA-ligase_1_N"/>
</dbReference>
<dbReference type="InterPro" id="IPR002312">
    <property type="entry name" value="Asp/Asn-tRNA-synth_IIb"/>
</dbReference>
<dbReference type="InterPro" id="IPR047090">
    <property type="entry name" value="AspRS_core"/>
</dbReference>
<dbReference type="InterPro" id="IPR004115">
    <property type="entry name" value="GAD-like_sf"/>
</dbReference>
<dbReference type="InterPro" id="IPR029351">
    <property type="entry name" value="GAD_dom"/>
</dbReference>
<dbReference type="InterPro" id="IPR012340">
    <property type="entry name" value="NA-bd_OB-fold"/>
</dbReference>
<dbReference type="InterPro" id="IPR004365">
    <property type="entry name" value="NA-bd_OB_tRNA"/>
</dbReference>
<dbReference type="NCBIfam" id="TIGR00459">
    <property type="entry name" value="aspS_bact"/>
    <property type="match status" value="1"/>
</dbReference>
<dbReference type="NCBIfam" id="NF001750">
    <property type="entry name" value="PRK00476.1"/>
    <property type="match status" value="1"/>
</dbReference>
<dbReference type="PANTHER" id="PTHR22594:SF5">
    <property type="entry name" value="ASPARTATE--TRNA LIGASE, MITOCHONDRIAL"/>
    <property type="match status" value="1"/>
</dbReference>
<dbReference type="PANTHER" id="PTHR22594">
    <property type="entry name" value="ASPARTYL/LYSYL-TRNA SYNTHETASE"/>
    <property type="match status" value="1"/>
</dbReference>
<dbReference type="Pfam" id="PF02938">
    <property type="entry name" value="GAD"/>
    <property type="match status" value="1"/>
</dbReference>
<dbReference type="Pfam" id="PF00152">
    <property type="entry name" value="tRNA-synt_2"/>
    <property type="match status" value="1"/>
</dbReference>
<dbReference type="Pfam" id="PF01336">
    <property type="entry name" value="tRNA_anti-codon"/>
    <property type="match status" value="1"/>
</dbReference>
<dbReference type="PRINTS" id="PR01042">
    <property type="entry name" value="TRNASYNTHASP"/>
</dbReference>
<dbReference type="SUPFAM" id="SSF55681">
    <property type="entry name" value="Class II aaRS and biotin synthetases"/>
    <property type="match status" value="1"/>
</dbReference>
<dbReference type="SUPFAM" id="SSF55261">
    <property type="entry name" value="GAD domain-like"/>
    <property type="match status" value="1"/>
</dbReference>
<dbReference type="SUPFAM" id="SSF50249">
    <property type="entry name" value="Nucleic acid-binding proteins"/>
    <property type="match status" value="1"/>
</dbReference>
<dbReference type="PROSITE" id="PS50862">
    <property type="entry name" value="AA_TRNA_LIGASE_II"/>
    <property type="match status" value="1"/>
</dbReference>
<keyword id="KW-0030">Aminoacyl-tRNA synthetase</keyword>
<keyword id="KW-0067">ATP-binding</keyword>
<keyword id="KW-0963">Cytoplasm</keyword>
<keyword id="KW-0436">Ligase</keyword>
<keyword id="KW-0547">Nucleotide-binding</keyword>
<keyword id="KW-0648">Protein biosynthesis</keyword>
<comment type="function">
    <text evidence="1">Aspartyl-tRNA synthetase with relaxed tRNA specificity since it is able to aspartylate not only its cognate tRNA(Asp) but also tRNA(Asn). Reaction proceeds in two steps: L-aspartate is first activated by ATP to form Asp-AMP and then transferred to the acceptor end of tRNA(Asp/Asn).</text>
</comment>
<comment type="catalytic activity">
    <reaction evidence="1">
        <text>tRNA(Asx) + L-aspartate + ATP = L-aspartyl-tRNA(Asx) + AMP + diphosphate</text>
        <dbReference type="Rhea" id="RHEA:18349"/>
        <dbReference type="Rhea" id="RHEA-COMP:9710"/>
        <dbReference type="Rhea" id="RHEA-COMP:9711"/>
        <dbReference type="ChEBI" id="CHEBI:29991"/>
        <dbReference type="ChEBI" id="CHEBI:30616"/>
        <dbReference type="ChEBI" id="CHEBI:33019"/>
        <dbReference type="ChEBI" id="CHEBI:78442"/>
        <dbReference type="ChEBI" id="CHEBI:78516"/>
        <dbReference type="ChEBI" id="CHEBI:456215"/>
        <dbReference type="EC" id="6.1.1.23"/>
    </reaction>
</comment>
<comment type="subunit">
    <text evidence="1">Homodimer.</text>
</comment>
<comment type="subcellular location">
    <subcellularLocation>
        <location evidence="1">Cytoplasm</location>
    </subcellularLocation>
</comment>
<comment type="similarity">
    <text evidence="1">Belongs to the class-II aminoacyl-tRNA synthetase family. Type 1 subfamily.</text>
</comment>
<sequence length="602" mass="68410">MRNKICEELNKSDIGKEVNLCGWVDRRRDHGGVIFIDLRDHSGFMQITINPEDGETLFKQAEILRNETVIMVNGIVNERPKDSINKNIITGELELKVQDLQILNQIKNNLPFPVSVHDYENTKEELRLKYRYLDIRRGKLLENLKTRHKIIKAIRNYLDNSGFTEVETPLLTKSTPEGARDFLVPARLSNGDFFALPQSPQLFKQLLMVGGLDKYYQIAKCFRDEDLRADRQPEFTQLDIEMSFVSEEEIIAFNEKLIKHIWKNVLNINLNEDFPRMSWQEAMDNYGTDRPDTRYGMLLKNLGEILGNIGFNIFTKAIQMGGAIKSITIKNGNSSISNVRIKPGGDIFKVAQEAGAGGLAFIRVKGDELETIGAIKNNLNKDHISNILKITEAEDGDLILLGAGSTKIVNQSLDRVRQYIAKDLNLLENQKAQSQWNFLWITDFPMFEMNEEEKRFEALHHPFCSPKNVKFEDKKELTKKIETSTAYAYDLVLNGLELGGGSLRIHQAEMQKEVLRTVGLTDHQIDEKFGFLIEALEMGAPPHGGIAFGLDRITMLILGVDSIRETIAFPKNQQAKCLLTNAPSNVSKSQLKELDIEITIDE</sequence>
<reference key="1">
    <citation type="journal article" date="2007" name="PLoS Genet.">
        <title>Patterns and implications of gene gain and loss in the evolution of Prochlorococcus.</title>
        <authorList>
            <person name="Kettler G.C."/>
            <person name="Martiny A.C."/>
            <person name="Huang K."/>
            <person name="Zucker J."/>
            <person name="Coleman M.L."/>
            <person name="Rodrigue S."/>
            <person name="Chen F."/>
            <person name="Lapidus A."/>
            <person name="Ferriera S."/>
            <person name="Johnson J."/>
            <person name="Steglich C."/>
            <person name="Church G.M."/>
            <person name="Richardson P."/>
            <person name="Chisholm S.W."/>
        </authorList>
    </citation>
    <scope>NUCLEOTIDE SEQUENCE [LARGE SCALE GENOMIC DNA]</scope>
    <source>
        <strain>MIT 9515</strain>
    </source>
</reference>
<feature type="chain" id="PRO_1000006725" description="Aspartate--tRNA(Asp/Asn) ligase">
    <location>
        <begin position="1"/>
        <end position="602"/>
    </location>
</feature>
<feature type="region of interest" description="Aspartate" evidence="1">
    <location>
        <begin position="201"/>
        <end position="204"/>
    </location>
</feature>
<feature type="binding site" evidence="1">
    <location>
        <position position="177"/>
    </location>
    <ligand>
        <name>L-aspartate</name>
        <dbReference type="ChEBI" id="CHEBI:29991"/>
    </ligand>
</feature>
<feature type="binding site" evidence="1">
    <location>
        <begin position="223"/>
        <end position="225"/>
    </location>
    <ligand>
        <name>ATP</name>
        <dbReference type="ChEBI" id="CHEBI:30616"/>
    </ligand>
</feature>
<feature type="binding site" evidence="1">
    <location>
        <position position="223"/>
    </location>
    <ligand>
        <name>L-aspartate</name>
        <dbReference type="ChEBI" id="CHEBI:29991"/>
    </ligand>
</feature>
<feature type="binding site" evidence="1">
    <location>
        <position position="232"/>
    </location>
    <ligand>
        <name>ATP</name>
        <dbReference type="ChEBI" id="CHEBI:30616"/>
    </ligand>
</feature>
<feature type="binding site" evidence="1">
    <location>
        <position position="460"/>
    </location>
    <ligand>
        <name>L-aspartate</name>
        <dbReference type="ChEBI" id="CHEBI:29991"/>
    </ligand>
</feature>
<feature type="binding site" evidence="1">
    <location>
        <position position="497"/>
    </location>
    <ligand>
        <name>ATP</name>
        <dbReference type="ChEBI" id="CHEBI:30616"/>
    </ligand>
</feature>
<feature type="binding site" evidence="1">
    <location>
        <position position="504"/>
    </location>
    <ligand>
        <name>L-aspartate</name>
        <dbReference type="ChEBI" id="CHEBI:29991"/>
    </ligand>
</feature>
<feature type="binding site" evidence="1">
    <location>
        <begin position="549"/>
        <end position="552"/>
    </location>
    <ligand>
        <name>ATP</name>
        <dbReference type="ChEBI" id="CHEBI:30616"/>
    </ligand>
</feature>
<feature type="site" description="Important for tRNA non-discrimination" evidence="1">
    <location>
        <position position="30"/>
    </location>
</feature>
<accession>A2BZ75</accession>
<name>SYDND_PROM5</name>
<proteinExistence type="inferred from homology"/>
<organism>
    <name type="scientific">Prochlorococcus marinus (strain MIT 9515)</name>
    <dbReference type="NCBI Taxonomy" id="167542"/>
    <lineage>
        <taxon>Bacteria</taxon>
        <taxon>Bacillati</taxon>
        <taxon>Cyanobacteriota</taxon>
        <taxon>Cyanophyceae</taxon>
        <taxon>Synechococcales</taxon>
        <taxon>Prochlorococcaceae</taxon>
        <taxon>Prochlorococcus</taxon>
    </lineage>
</organism>